<dbReference type="EC" id="2.1.1.-"/>
<dbReference type="EMBL" id="AL451014">
    <property type="protein sequence ID" value="CAC18188.2"/>
    <property type="molecule type" value="Genomic_DNA"/>
</dbReference>
<dbReference type="EMBL" id="CM002240">
    <property type="protein sequence ID" value="EAA32242.1"/>
    <property type="molecule type" value="Genomic_DNA"/>
</dbReference>
<dbReference type="RefSeq" id="XP_961478.1">
    <property type="nucleotide sequence ID" value="XM_956385.3"/>
</dbReference>
<dbReference type="SMR" id="Q9HE26"/>
<dbReference type="FunCoup" id="Q9HE26">
    <property type="interactions" value="985"/>
</dbReference>
<dbReference type="STRING" id="367110.Q9HE26"/>
<dbReference type="PaxDb" id="5141-EFNCRP00000003455"/>
<dbReference type="EnsemblFungi" id="EAA32242">
    <property type="protein sequence ID" value="EAA32242"/>
    <property type="gene ID" value="NCU03702"/>
</dbReference>
<dbReference type="GeneID" id="3877642"/>
<dbReference type="KEGG" id="ncr:NCU03702"/>
<dbReference type="VEuPathDB" id="FungiDB:NCU03702"/>
<dbReference type="HOGENOM" id="CLU_059055_1_0_1"/>
<dbReference type="InParanoid" id="Q9HE26"/>
<dbReference type="OMA" id="WNPNKSK"/>
<dbReference type="OrthoDB" id="1859733at2759"/>
<dbReference type="Proteomes" id="UP000001805">
    <property type="component" value="Chromosome 2, Linkage Group V"/>
</dbReference>
<dbReference type="GO" id="GO:0031428">
    <property type="term" value="C:box C/D methylation guide snoRNP complex"/>
    <property type="evidence" value="ECO:0000318"/>
    <property type="project" value="GO_Central"/>
</dbReference>
<dbReference type="GO" id="GO:0005730">
    <property type="term" value="C:nucleolus"/>
    <property type="evidence" value="ECO:0000318"/>
    <property type="project" value="GO_Central"/>
</dbReference>
<dbReference type="GO" id="GO:0032040">
    <property type="term" value="C:small-subunit processome"/>
    <property type="evidence" value="ECO:0000318"/>
    <property type="project" value="GO_Central"/>
</dbReference>
<dbReference type="GO" id="GO:1990259">
    <property type="term" value="F:histone H2AQ104 methyltransferase activity"/>
    <property type="evidence" value="ECO:0000318"/>
    <property type="project" value="GO_Central"/>
</dbReference>
<dbReference type="GO" id="GO:0003723">
    <property type="term" value="F:RNA binding"/>
    <property type="evidence" value="ECO:0000318"/>
    <property type="project" value="GO_Central"/>
</dbReference>
<dbReference type="GO" id="GO:0008649">
    <property type="term" value="F:rRNA methyltransferase activity"/>
    <property type="evidence" value="ECO:0000318"/>
    <property type="project" value="GO_Central"/>
</dbReference>
<dbReference type="GO" id="GO:0000494">
    <property type="term" value="P:box C/D sno(s)RNA 3'-end processing"/>
    <property type="evidence" value="ECO:0000318"/>
    <property type="project" value="GO_Central"/>
</dbReference>
<dbReference type="GO" id="GO:0031167">
    <property type="term" value="P:rRNA methylation"/>
    <property type="evidence" value="ECO:0000318"/>
    <property type="project" value="GO_Central"/>
</dbReference>
<dbReference type="CDD" id="cd02440">
    <property type="entry name" value="AdoMet_MTases"/>
    <property type="match status" value="1"/>
</dbReference>
<dbReference type="FunFam" id="3.30.200.20:FF:000056">
    <property type="entry name" value="Fibrillarin like 1"/>
    <property type="match status" value="1"/>
</dbReference>
<dbReference type="FunFam" id="3.40.50.150:FF:000001">
    <property type="entry name" value="Fibrillarin like 1"/>
    <property type="match status" value="1"/>
</dbReference>
<dbReference type="Gene3D" id="3.30.200.20">
    <property type="entry name" value="Phosphorylase Kinase, domain 1"/>
    <property type="match status" value="1"/>
</dbReference>
<dbReference type="Gene3D" id="3.40.50.150">
    <property type="entry name" value="Vaccinia Virus protein VP39"/>
    <property type="match status" value="1"/>
</dbReference>
<dbReference type="HAMAP" id="MF_00351">
    <property type="entry name" value="RNA_methyltransf_FlpA"/>
    <property type="match status" value="1"/>
</dbReference>
<dbReference type="InterPro" id="IPR000692">
    <property type="entry name" value="Fibrillarin"/>
</dbReference>
<dbReference type="InterPro" id="IPR029063">
    <property type="entry name" value="SAM-dependent_MTases_sf"/>
</dbReference>
<dbReference type="NCBIfam" id="NF003276">
    <property type="entry name" value="PRK04266.1-2"/>
    <property type="match status" value="1"/>
</dbReference>
<dbReference type="PANTHER" id="PTHR10335:SF17">
    <property type="entry name" value="FIBRILLARIN"/>
    <property type="match status" value="1"/>
</dbReference>
<dbReference type="PANTHER" id="PTHR10335">
    <property type="entry name" value="RRNA 2-O-METHYLTRANSFERASE FIBRILLARIN"/>
    <property type="match status" value="1"/>
</dbReference>
<dbReference type="Pfam" id="PF01269">
    <property type="entry name" value="Fibrillarin"/>
    <property type="match status" value="1"/>
</dbReference>
<dbReference type="PIRSF" id="PIRSF006540">
    <property type="entry name" value="Nop17p"/>
    <property type="match status" value="1"/>
</dbReference>
<dbReference type="PRINTS" id="PR00052">
    <property type="entry name" value="FIBRILLARIN"/>
</dbReference>
<dbReference type="SMART" id="SM01206">
    <property type="entry name" value="Fibrillarin"/>
    <property type="match status" value="1"/>
</dbReference>
<dbReference type="SUPFAM" id="SSF53335">
    <property type="entry name" value="S-adenosyl-L-methionine-dependent methyltransferases"/>
    <property type="match status" value="1"/>
</dbReference>
<sequence length="323" mass="33812">MGFERGGRGGARGGGRGGFGGDRGGRGGARGGSRGGFGGGRGGGAPRGRGGPRGGGRGGATRGRGGARGGAKGGAAGKKVIVEPHRHKGVFVARGGKEDLLATVNLVPGESVYGEKRISVENASKEEGGASTKTEYRIWNPFRSKLAAGILGGLETIYMKPGSKVLYLGAASGTSVSHVADIVGPTGSVYAVEFSHRSGRDLINMATRRTNVIPIVEDARKPMAYRMLLPMVDVIFADVAQPDQARIVGINAKLFLKQGGGLLISIKASCIDSTAPPEQVFASEVQKLREDKFFPKEQLTLEPYERDHAMVSCVYQQKEFVDN</sequence>
<reference key="1">
    <citation type="journal article" date="2003" name="Nucleic Acids Res.">
        <title>What's in the genome of a filamentous fungus? Analysis of the Neurospora genome sequence.</title>
        <authorList>
            <person name="Mannhaupt G."/>
            <person name="Montrone C."/>
            <person name="Haase D."/>
            <person name="Mewes H.-W."/>
            <person name="Aign V."/>
            <person name="Hoheisel J.D."/>
            <person name="Fartmann B."/>
            <person name="Nyakatura G."/>
            <person name="Kempken F."/>
            <person name="Maier J."/>
            <person name="Schulte U."/>
        </authorList>
    </citation>
    <scope>NUCLEOTIDE SEQUENCE [LARGE SCALE GENOMIC DNA]</scope>
    <source>
        <strain>ATCC 24698 / 74-OR23-1A / CBS 708.71 / DSM 1257 / FGSC 987</strain>
    </source>
</reference>
<reference key="2">
    <citation type="journal article" date="2003" name="Nature">
        <title>The genome sequence of the filamentous fungus Neurospora crassa.</title>
        <authorList>
            <person name="Galagan J.E."/>
            <person name="Calvo S.E."/>
            <person name="Borkovich K.A."/>
            <person name="Selker E.U."/>
            <person name="Read N.D."/>
            <person name="Jaffe D.B."/>
            <person name="FitzHugh W."/>
            <person name="Ma L.-J."/>
            <person name="Smirnov S."/>
            <person name="Purcell S."/>
            <person name="Rehman B."/>
            <person name="Elkins T."/>
            <person name="Engels R."/>
            <person name="Wang S."/>
            <person name="Nielsen C.B."/>
            <person name="Butler J."/>
            <person name="Endrizzi M."/>
            <person name="Qui D."/>
            <person name="Ianakiev P."/>
            <person name="Bell-Pedersen D."/>
            <person name="Nelson M.A."/>
            <person name="Werner-Washburne M."/>
            <person name="Selitrennikoff C.P."/>
            <person name="Kinsey J.A."/>
            <person name="Braun E.L."/>
            <person name="Zelter A."/>
            <person name="Schulte U."/>
            <person name="Kothe G.O."/>
            <person name="Jedd G."/>
            <person name="Mewes H.-W."/>
            <person name="Staben C."/>
            <person name="Marcotte E."/>
            <person name="Greenberg D."/>
            <person name="Roy A."/>
            <person name="Foley K."/>
            <person name="Naylor J."/>
            <person name="Stange-Thomann N."/>
            <person name="Barrett R."/>
            <person name="Gnerre S."/>
            <person name="Kamal M."/>
            <person name="Kamvysselis M."/>
            <person name="Mauceli E.W."/>
            <person name="Bielke C."/>
            <person name="Rudd S."/>
            <person name="Frishman D."/>
            <person name="Krystofova S."/>
            <person name="Rasmussen C."/>
            <person name="Metzenberg R.L."/>
            <person name="Perkins D.D."/>
            <person name="Kroken S."/>
            <person name="Cogoni C."/>
            <person name="Macino G."/>
            <person name="Catcheside D.E.A."/>
            <person name="Li W."/>
            <person name="Pratt R.J."/>
            <person name="Osmani S.A."/>
            <person name="DeSouza C.P.C."/>
            <person name="Glass N.L."/>
            <person name="Orbach M.J."/>
            <person name="Berglund J.A."/>
            <person name="Voelker R."/>
            <person name="Yarden O."/>
            <person name="Plamann M."/>
            <person name="Seiler S."/>
            <person name="Dunlap J.C."/>
            <person name="Radford A."/>
            <person name="Aramayo R."/>
            <person name="Natvig D.O."/>
            <person name="Alex L.A."/>
            <person name="Mannhaupt G."/>
            <person name="Ebbole D.J."/>
            <person name="Freitag M."/>
            <person name="Paulsen I."/>
            <person name="Sachs M.S."/>
            <person name="Lander E.S."/>
            <person name="Nusbaum C."/>
            <person name="Birren B.W."/>
        </authorList>
    </citation>
    <scope>NUCLEOTIDE SEQUENCE [LARGE SCALE GENOMIC DNA]</scope>
    <source>
        <strain>ATCC 24698 / 74-OR23-1A / CBS 708.71 / DSM 1257 / FGSC 987</strain>
    </source>
</reference>
<accession>Q9HE26</accession>
<accession>Q1K7Z4</accession>
<feature type="chain" id="PRO_0000148525" description="rRNA 2'-O-methyltransferase fibrillarin">
    <location>
        <begin position="1"/>
        <end position="323"/>
    </location>
</feature>
<feature type="region of interest" description="Disordered" evidence="2">
    <location>
        <begin position="1"/>
        <end position="80"/>
    </location>
</feature>
<feature type="compositionally biased region" description="Gly residues" evidence="2">
    <location>
        <begin position="8"/>
        <end position="76"/>
    </location>
</feature>
<feature type="binding site" evidence="1">
    <location>
        <begin position="174"/>
        <end position="175"/>
    </location>
    <ligand>
        <name>S-adenosyl-L-methionine</name>
        <dbReference type="ChEBI" id="CHEBI:59789"/>
    </ligand>
</feature>
<feature type="binding site" evidence="1">
    <location>
        <begin position="193"/>
        <end position="194"/>
    </location>
    <ligand>
        <name>S-adenosyl-L-methionine</name>
        <dbReference type="ChEBI" id="CHEBI:59789"/>
    </ligand>
</feature>
<feature type="binding site" evidence="1">
    <location>
        <begin position="218"/>
        <end position="219"/>
    </location>
    <ligand>
        <name>S-adenosyl-L-methionine</name>
        <dbReference type="ChEBI" id="CHEBI:59789"/>
    </ligand>
</feature>
<feature type="binding site" evidence="1">
    <location>
        <begin position="238"/>
        <end position="241"/>
    </location>
    <ligand>
        <name>S-adenosyl-L-methionine</name>
        <dbReference type="ChEBI" id="CHEBI:59789"/>
    </ligand>
</feature>
<feature type="modified residue" description="Asymmetric dimethylarginine" evidence="1">
    <location>
        <position position="5"/>
    </location>
</feature>
<feature type="modified residue" description="Asymmetric dimethylarginine" evidence="1">
    <location>
        <position position="8"/>
    </location>
</feature>
<feature type="modified residue" description="Asymmetric dimethylarginine" evidence="1">
    <location>
        <position position="12"/>
    </location>
</feature>
<feature type="modified residue" description="Asymmetric dimethylarginine" evidence="1">
    <location>
        <position position="16"/>
    </location>
</feature>
<feature type="modified residue" description="Asymmetric dimethylarginine" evidence="1">
    <location>
        <position position="23"/>
    </location>
</feature>
<feature type="modified residue" description="Asymmetric dimethylarginine" evidence="1">
    <location>
        <position position="26"/>
    </location>
</feature>
<feature type="modified residue" description="Asymmetric dimethylarginine" evidence="1">
    <location>
        <position position="30"/>
    </location>
</feature>
<feature type="modified residue" description="Asymmetric dimethylarginine" evidence="1">
    <location>
        <position position="34"/>
    </location>
</feature>
<feature type="modified residue" description="Asymmetric dimethylarginine" evidence="1">
    <location>
        <position position="41"/>
    </location>
</feature>
<feature type="modified residue" description="Asymmetric dimethylarginine" evidence="1">
    <location>
        <position position="47"/>
    </location>
</feature>
<feature type="modified residue" description="Asymmetric dimethylarginine" evidence="1">
    <location>
        <position position="49"/>
    </location>
</feature>
<feature type="modified residue" description="Asymmetric dimethylarginine" evidence="1">
    <location>
        <position position="53"/>
    </location>
</feature>
<feature type="modified residue" description="Asymmetric dimethylarginine" evidence="1">
    <location>
        <position position="57"/>
    </location>
</feature>
<feature type="modified residue" description="Asymmetric dimethylarginine" evidence="1">
    <location>
        <position position="62"/>
    </location>
</feature>
<feature type="modified residue" description="Asymmetric dimethylarginine" evidence="1">
    <location>
        <position position="64"/>
    </location>
</feature>
<feature type="modified residue" description="Asymmetric dimethylarginine" evidence="1">
    <location>
        <position position="68"/>
    </location>
</feature>
<protein>
    <recommendedName>
        <fullName>rRNA 2'-O-methyltransferase fibrillarin</fullName>
        <ecNumber>2.1.1.-</ecNumber>
    </recommendedName>
    <alternativeName>
        <fullName>Histone-glutamine methyltransferase</fullName>
    </alternativeName>
</protein>
<gene>
    <name type="primary">nop-1</name>
    <name type="ORF">B9B15.180</name>
    <name type="ORF">NCU03702</name>
</gene>
<organism>
    <name type="scientific">Neurospora crassa (strain ATCC 24698 / 74-OR23-1A / CBS 708.71 / DSM 1257 / FGSC 987)</name>
    <dbReference type="NCBI Taxonomy" id="367110"/>
    <lineage>
        <taxon>Eukaryota</taxon>
        <taxon>Fungi</taxon>
        <taxon>Dikarya</taxon>
        <taxon>Ascomycota</taxon>
        <taxon>Pezizomycotina</taxon>
        <taxon>Sordariomycetes</taxon>
        <taxon>Sordariomycetidae</taxon>
        <taxon>Sordariales</taxon>
        <taxon>Sordariaceae</taxon>
        <taxon>Neurospora</taxon>
    </lineage>
</organism>
<proteinExistence type="inferred from homology"/>
<keyword id="KW-0488">Methylation</keyword>
<keyword id="KW-0489">Methyltransferase</keyword>
<keyword id="KW-0539">Nucleus</keyword>
<keyword id="KW-1185">Reference proteome</keyword>
<keyword id="KW-0687">Ribonucleoprotein</keyword>
<keyword id="KW-0694">RNA-binding</keyword>
<keyword id="KW-0698">rRNA processing</keyword>
<keyword id="KW-0949">S-adenosyl-L-methionine</keyword>
<keyword id="KW-0808">Transferase</keyword>
<evidence type="ECO:0000250" key="1"/>
<evidence type="ECO:0000256" key="2">
    <source>
        <dbReference type="SAM" id="MobiDB-lite"/>
    </source>
</evidence>
<evidence type="ECO:0000305" key="3"/>
<name>FBRL_NEUCR</name>
<comment type="function">
    <text evidence="1">S-adenosyl-L-methionine-dependent methyltransferase that has the ability to methylate both RNAs and proteins. Involved in pre-rRNA processing. Utilizes the methyl donor S-adenosyl-L-methionine to catalyze the site-specific 2'-hydroxyl methylation of ribose moieties in pre-ribosomal RNA. Site specificity is provided by a guide RNA that base pairs with the substrate. Methylation occurs at a characteristic distance from the sequence involved in base pairing with the guide RNA. Also acts as a protein methyltransferase by mediating methylation of 'Gln-105' of histone H2A (H2AQ105me), a modification that impairs binding of the FACT complex and is specifically present at 35S ribosomal DNA locus (By similarity).</text>
</comment>
<comment type="catalytic activity">
    <reaction>
        <text>L-glutaminyl-[histone H2A] + S-adenosyl-L-methionine = N(5)-methyl-L-glutaminyl-[histone H2A] + S-adenosyl-L-homocysteine + H(+)</text>
        <dbReference type="Rhea" id="RHEA:50904"/>
        <dbReference type="Rhea" id="RHEA-COMP:12837"/>
        <dbReference type="Rhea" id="RHEA-COMP:12839"/>
        <dbReference type="ChEBI" id="CHEBI:15378"/>
        <dbReference type="ChEBI" id="CHEBI:30011"/>
        <dbReference type="ChEBI" id="CHEBI:57856"/>
        <dbReference type="ChEBI" id="CHEBI:59789"/>
        <dbReference type="ChEBI" id="CHEBI:61891"/>
    </reaction>
</comment>
<comment type="subunit">
    <text evidence="1">Component of box C/D small nucleolar ribonucleoprotein (snoRNP) particles.</text>
</comment>
<comment type="subcellular location">
    <subcellularLocation>
        <location evidence="1">Nucleus</location>
        <location evidence="1">Nucleolus</location>
    </subcellularLocation>
    <text evidence="1">Fibrillar region of the nucleolus.</text>
</comment>
<comment type="PTM">
    <text evidence="1">By homology to other fibrillarins, some or all of the N-terminal domain arginines are modified to asymmetric dimethylarginine (DMA).</text>
</comment>
<comment type="similarity">
    <text evidence="3">Belongs to the methyltransferase superfamily. Fibrillarin family.</text>
</comment>